<gene>
    <name evidence="1" type="primary">truB</name>
    <name type="ordered locus">LGAS_0816</name>
</gene>
<reference key="1">
    <citation type="journal article" date="2006" name="Proc. Natl. Acad. Sci. U.S.A.">
        <title>Comparative genomics of the lactic acid bacteria.</title>
        <authorList>
            <person name="Makarova K.S."/>
            <person name="Slesarev A."/>
            <person name="Wolf Y.I."/>
            <person name="Sorokin A."/>
            <person name="Mirkin B."/>
            <person name="Koonin E.V."/>
            <person name="Pavlov A."/>
            <person name="Pavlova N."/>
            <person name="Karamychev V."/>
            <person name="Polouchine N."/>
            <person name="Shakhova V."/>
            <person name="Grigoriev I."/>
            <person name="Lou Y."/>
            <person name="Rohksar D."/>
            <person name="Lucas S."/>
            <person name="Huang K."/>
            <person name="Goodstein D.M."/>
            <person name="Hawkins T."/>
            <person name="Plengvidhya V."/>
            <person name="Welker D."/>
            <person name="Hughes J."/>
            <person name="Goh Y."/>
            <person name="Benson A."/>
            <person name="Baldwin K."/>
            <person name="Lee J.-H."/>
            <person name="Diaz-Muniz I."/>
            <person name="Dosti B."/>
            <person name="Smeianov V."/>
            <person name="Wechter W."/>
            <person name="Barabote R."/>
            <person name="Lorca G."/>
            <person name="Altermann E."/>
            <person name="Barrangou R."/>
            <person name="Ganesan B."/>
            <person name="Xie Y."/>
            <person name="Rawsthorne H."/>
            <person name="Tamir D."/>
            <person name="Parker C."/>
            <person name="Breidt F."/>
            <person name="Broadbent J.R."/>
            <person name="Hutkins R."/>
            <person name="O'Sullivan D."/>
            <person name="Steele J."/>
            <person name="Unlu G."/>
            <person name="Saier M.H. Jr."/>
            <person name="Klaenhammer T."/>
            <person name="Richardson P."/>
            <person name="Kozyavkin S."/>
            <person name="Weimer B.C."/>
            <person name="Mills D.A."/>
        </authorList>
    </citation>
    <scope>NUCLEOTIDE SEQUENCE [LARGE SCALE GENOMIC DNA]</scope>
    <source>
        <strain>ATCC 33323 / DSM 20243 / BCRC 14619 / CIP 102991 / JCM 1131 / KCTC 3163 / NCIMB 11718 / NCTC 13722 / AM63</strain>
    </source>
</reference>
<accession>Q044B5</accession>
<keyword id="KW-0413">Isomerase</keyword>
<keyword id="KW-0819">tRNA processing</keyword>
<sequence length="297" mass="33227">MLNGIVVVNKPRGVTSSDCVYKLRKILQIRKIGHAGTLDPEVNGVLPIAIGQATKLIELMHEKPKSYIGSGMFGRATDSYDLDGKTIAEEKINTPFTSNEIIAGMEKLTGKLEQVPPIYSAVRVNGKRLYEYARENIPVERPKRKVNVYSYELTQDPEYDPLEKTESFNFAIRCSKGTYVRSLVNDLGEELGVPAVMTSLTRTSSSGYDLNQAVDLETIEAEIDTPGKWLQPIDSFFAELPQLQLSPDQFKRVSNGASISLNTSYAKVALVYNGHIKAIYRRQGKIYRPEMMLLKNE</sequence>
<dbReference type="EC" id="5.4.99.25" evidence="1"/>
<dbReference type="EMBL" id="CP000413">
    <property type="protein sequence ID" value="ABJ60207.1"/>
    <property type="molecule type" value="Genomic_DNA"/>
</dbReference>
<dbReference type="RefSeq" id="WP_003656341.1">
    <property type="nucleotide sequence ID" value="NZ_WBMG01000005.1"/>
</dbReference>
<dbReference type="SMR" id="Q044B5"/>
<dbReference type="GeneID" id="29639997"/>
<dbReference type="KEGG" id="lga:LGAS_0816"/>
<dbReference type="HOGENOM" id="CLU_032087_0_1_9"/>
<dbReference type="BioCyc" id="LGAS324831:G1G6Y-810-MONOMER"/>
<dbReference type="Proteomes" id="UP000000664">
    <property type="component" value="Chromosome"/>
</dbReference>
<dbReference type="GO" id="GO:0003723">
    <property type="term" value="F:RNA binding"/>
    <property type="evidence" value="ECO:0007669"/>
    <property type="project" value="InterPro"/>
</dbReference>
<dbReference type="GO" id="GO:0160148">
    <property type="term" value="F:tRNA pseudouridine(55) synthase activity"/>
    <property type="evidence" value="ECO:0007669"/>
    <property type="project" value="UniProtKB-EC"/>
</dbReference>
<dbReference type="GO" id="GO:1990481">
    <property type="term" value="P:mRNA pseudouridine synthesis"/>
    <property type="evidence" value="ECO:0007669"/>
    <property type="project" value="TreeGrafter"/>
</dbReference>
<dbReference type="GO" id="GO:0031119">
    <property type="term" value="P:tRNA pseudouridine synthesis"/>
    <property type="evidence" value="ECO:0007669"/>
    <property type="project" value="UniProtKB-UniRule"/>
</dbReference>
<dbReference type="CDD" id="cd02573">
    <property type="entry name" value="PseudoU_synth_EcTruB"/>
    <property type="match status" value="1"/>
</dbReference>
<dbReference type="Gene3D" id="3.30.2350.10">
    <property type="entry name" value="Pseudouridine synthase"/>
    <property type="match status" value="1"/>
</dbReference>
<dbReference type="HAMAP" id="MF_01080">
    <property type="entry name" value="TruB_bact"/>
    <property type="match status" value="1"/>
</dbReference>
<dbReference type="InterPro" id="IPR020103">
    <property type="entry name" value="PsdUridine_synth_cat_dom_sf"/>
</dbReference>
<dbReference type="InterPro" id="IPR002501">
    <property type="entry name" value="PsdUridine_synth_N"/>
</dbReference>
<dbReference type="InterPro" id="IPR014780">
    <property type="entry name" value="tRNA_psdUridine_synth_TruB"/>
</dbReference>
<dbReference type="InterPro" id="IPR032819">
    <property type="entry name" value="TruB_C"/>
</dbReference>
<dbReference type="NCBIfam" id="TIGR00431">
    <property type="entry name" value="TruB"/>
    <property type="match status" value="1"/>
</dbReference>
<dbReference type="PANTHER" id="PTHR13767:SF2">
    <property type="entry name" value="PSEUDOURIDYLATE SYNTHASE TRUB1"/>
    <property type="match status" value="1"/>
</dbReference>
<dbReference type="PANTHER" id="PTHR13767">
    <property type="entry name" value="TRNA-PSEUDOURIDINE SYNTHASE"/>
    <property type="match status" value="1"/>
</dbReference>
<dbReference type="Pfam" id="PF16198">
    <property type="entry name" value="TruB_C_2"/>
    <property type="match status" value="1"/>
</dbReference>
<dbReference type="Pfam" id="PF01509">
    <property type="entry name" value="TruB_N"/>
    <property type="match status" value="1"/>
</dbReference>
<dbReference type="SUPFAM" id="SSF55120">
    <property type="entry name" value="Pseudouridine synthase"/>
    <property type="match status" value="1"/>
</dbReference>
<proteinExistence type="inferred from homology"/>
<feature type="chain" id="PRO_1000084613" description="tRNA pseudouridine synthase B">
    <location>
        <begin position="1"/>
        <end position="297"/>
    </location>
</feature>
<feature type="active site" description="Nucleophile" evidence="1">
    <location>
        <position position="39"/>
    </location>
</feature>
<protein>
    <recommendedName>
        <fullName evidence="1">tRNA pseudouridine synthase B</fullName>
        <ecNumber evidence="1">5.4.99.25</ecNumber>
    </recommendedName>
    <alternativeName>
        <fullName evidence="1">tRNA pseudouridine(55) synthase</fullName>
        <shortName evidence="1">Psi55 synthase</shortName>
    </alternativeName>
    <alternativeName>
        <fullName evidence="1">tRNA pseudouridylate synthase</fullName>
    </alternativeName>
    <alternativeName>
        <fullName evidence="1">tRNA-uridine isomerase</fullName>
    </alternativeName>
</protein>
<organism>
    <name type="scientific">Lactobacillus gasseri (strain ATCC 33323 / DSM 20243 / BCRC 14619 / CIP 102991 / JCM 1131 / KCTC 3163 / NCIMB 11718 / NCTC 13722 / AM63)</name>
    <dbReference type="NCBI Taxonomy" id="324831"/>
    <lineage>
        <taxon>Bacteria</taxon>
        <taxon>Bacillati</taxon>
        <taxon>Bacillota</taxon>
        <taxon>Bacilli</taxon>
        <taxon>Lactobacillales</taxon>
        <taxon>Lactobacillaceae</taxon>
        <taxon>Lactobacillus</taxon>
    </lineage>
</organism>
<evidence type="ECO:0000255" key="1">
    <source>
        <dbReference type="HAMAP-Rule" id="MF_01080"/>
    </source>
</evidence>
<comment type="function">
    <text evidence="1">Responsible for synthesis of pseudouridine from uracil-55 in the psi GC loop of transfer RNAs.</text>
</comment>
<comment type="catalytic activity">
    <reaction evidence="1">
        <text>uridine(55) in tRNA = pseudouridine(55) in tRNA</text>
        <dbReference type="Rhea" id="RHEA:42532"/>
        <dbReference type="Rhea" id="RHEA-COMP:10101"/>
        <dbReference type="Rhea" id="RHEA-COMP:10102"/>
        <dbReference type="ChEBI" id="CHEBI:65314"/>
        <dbReference type="ChEBI" id="CHEBI:65315"/>
        <dbReference type="EC" id="5.4.99.25"/>
    </reaction>
</comment>
<comment type="similarity">
    <text evidence="1">Belongs to the pseudouridine synthase TruB family. Type 1 subfamily.</text>
</comment>
<name>TRUB_LACGA</name>